<gene>
    <name evidence="1" type="primary">pxpA</name>
    <name type="ordered locus">USA300HOU_1605</name>
</gene>
<name>PXPA_STAAT</name>
<feature type="chain" id="PRO_1000083126" description="5-oxoprolinase subunit A">
    <location>
        <begin position="1"/>
        <end position="250"/>
    </location>
</feature>
<evidence type="ECO:0000255" key="1">
    <source>
        <dbReference type="HAMAP-Rule" id="MF_00691"/>
    </source>
</evidence>
<comment type="function">
    <text evidence="1">Catalyzes the cleavage of 5-oxoproline to form L-glutamate coupled to the hydrolysis of ATP to ADP and inorganic phosphate.</text>
</comment>
<comment type="catalytic activity">
    <reaction evidence="1">
        <text>5-oxo-L-proline + ATP + 2 H2O = L-glutamate + ADP + phosphate + H(+)</text>
        <dbReference type="Rhea" id="RHEA:10348"/>
        <dbReference type="ChEBI" id="CHEBI:15377"/>
        <dbReference type="ChEBI" id="CHEBI:15378"/>
        <dbReference type="ChEBI" id="CHEBI:29985"/>
        <dbReference type="ChEBI" id="CHEBI:30616"/>
        <dbReference type="ChEBI" id="CHEBI:43474"/>
        <dbReference type="ChEBI" id="CHEBI:58402"/>
        <dbReference type="ChEBI" id="CHEBI:456216"/>
        <dbReference type="EC" id="3.5.2.9"/>
    </reaction>
</comment>
<comment type="subunit">
    <text evidence="1">Forms a complex composed of PxpA, PxpB and PxpC.</text>
</comment>
<comment type="similarity">
    <text evidence="1">Belongs to the LamB/PxpA family.</text>
</comment>
<accession>A8Z4E3</accession>
<organism>
    <name type="scientific">Staphylococcus aureus (strain USA300 / TCH1516)</name>
    <dbReference type="NCBI Taxonomy" id="451516"/>
    <lineage>
        <taxon>Bacteria</taxon>
        <taxon>Bacillati</taxon>
        <taxon>Bacillota</taxon>
        <taxon>Bacilli</taxon>
        <taxon>Bacillales</taxon>
        <taxon>Staphylococcaceae</taxon>
        <taxon>Staphylococcus</taxon>
    </lineage>
</organism>
<protein>
    <recommendedName>
        <fullName evidence="1">5-oxoprolinase subunit A</fullName>
        <shortName evidence="1">5-OPase subunit A</shortName>
        <ecNumber evidence="1">3.5.2.9</ecNumber>
    </recommendedName>
    <alternativeName>
        <fullName evidence="1">5-oxoprolinase (ATP-hydrolyzing) subunit A</fullName>
    </alternativeName>
</protein>
<proteinExistence type="inferred from homology"/>
<sequence>MRVDLNCDLGEAFGNYSFGGDHQIIPLITSANVACGFHAGDENVMNETVKLAKAHNVAVGAHPGLPDLKGFGRRNIDISNDEIYNLMIYQLGALQGFCRIHQVKINHVKPHGALYQMGAKDREIANVIAQAVYDFDPSLVLVGLANSYLISEAKNVGLITASEVFADRRYEDDGQLVSRKESDAVITDTDEALKQVLKMVKENKVISKNNKEVTLQADTICVHGDGEHALLFVSKIREILMKEGIDIQSL</sequence>
<reference key="1">
    <citation type="journal article" date="2007" name="BMC Microbiol.">
        <title>Subtle genetic changes enhance virulence of methicillin resistant and sensitive Staphylococcus aureus.</title>
        <authorList>
            <person name="Highlander S.K."/>
            <person name="Hulten K.G."/>
            <person name="Qin X."/>
            <person name="Jiang H."/>
            <person name="Yerrapragada S."/>
            <person name="Mason E.O. Jr."/>
            <person name="Shang Y."/>
            <person name="Williams T.M."/>
            <person name="Fortunov R.M."/>
            <person name="Liu Y."/>
            <person name="Igboeli O."/>
            <person name="Petrosino J."/>
            <person name="Tirumalai M."/>
            <person name="Uzman A."/>
            <person name="Fox G.E."/>
            <person name="Cardenas A.M."/>
            <person name="Muzny D.M."/>
            <person name="Hemphill L."/>
            <person name="Ding Y."/>
            <person name="Dugan S."/>
            <person name="Blyth P.R."/>
            <person name="Buhay C.J."/>
            <person name="Dinh H.H."/>
            <person name="Hawes A.C."/>
            <person name="Holder M."/>
            <person name="Kovar C.L."/>
            <person name="Lee S.L."/>
            <person name="Liu W."/>
            <person name="Nazareth L.V."/>
            <person name="Wang Q."/>
            <person name="Zhou J."/>
            <person name="Kaplan S.L."/>
            <person name="Weinstock G.M."/>
        </authorList>
    </citation>
    <scope>NUCLEOTIDE SEQUENCE [LARGE SCALE GENOMIC DNA]</scope>
    <source>
        <strain>USA300 / TCH1516</strain>
    </source>
</reference>
<keyword id="KW-0067">ATP-binding</keyword>
<keyword id="KW-0378">Hydrolase</keyword>
<keyword id="KW-0547">Nucleotide-binding</keyword>
<dbReference type="EC" id="3.5.2.9" evidence="1"/>
<dbReference type="EMBL" id="CP000730">
    <property type="protein sequence ID" value="ABX29612.1"/>
    <property type="molecule type" value="Genomic_DNA"/>
</dbReference>
<dbReference type="RefSeq" id="WP_001261795.1">
    <property type="nucleotide sequence ID" value="NC_010079.1"/>
</dbReference>
<dbReference type="SMR" id="A8Z4E3"/>
<dbReference type="KEGG" id="sax:USA300HOU_1605"/>
<dbReference type="HOGENOM" id="CLU_069535_0_0_9"/>
<dbReference type="BioCyc" id="SAUR451516-HMP:GTV5-1624-MONOMER"/>
<dbReference type="GO" id="GO:0017168">
    <property type="term" value="F:5-oxoprolinase (ATP-hydrolyzing) activity"/>
    <property type="evidence" value="ECO:0007669"/>
    <property type="project" value="UniProtKB-UniRule"/>
</dbReference>
<dbReference type="GO" id="GO:0005524">
    <property type="term" value="F:ATP binding"/>
    <property type="evidence" value="ECO:0007669"/>
    <property type="project" value="UniProtKB-UniRule"/>
</dbReference>
<dbReference type="GO" id="GO:0005975">
    <property type="term" value="P:carbohydrate metabolic process"/>
    <property type="evidence" value="ECO:0007669"/>
    <property type="project" value="InterPro"/>
</dbReference>
<dbReference type="CDD" id="cd10787">
    <property type="entry name" value="LamB_YcsF_like"/>
    <property type="match status" value="1"/>
</dbReference>
<dbReference type="Gene3D" id="3.20.20.370">
    <property type="entry name" value="Glycoside hydrolase/deacetylase"/>
    <property type="match status" value="1"/>
</dbReference>
<dbReference type="HAMAP" id="MF_00691">
    <property type="entry name" value="PxpA"/>
    <property type="match status" value="1"/>
</dbReference>
<dbReference type="InterPro" id="IPR011330">
    <property type="entry name" value="Glyco_hydro/deAcase_b/a-brl"/>
</dbReference>
<dbReference type="InterPro" id="IPR005501">
    <property type="entry name" value="LamB/YcsF/PxpA-like"/>
</dbReference>
<dbReference type="NCBIfam" id="NF003813">
    <property type="entry name" value="PRK05406.1-2"/>
    <property type="match status" value="1"/>
</dbReference>
<dbReference type="NCBIfam" id="NF003814">
    <property type="entry name" value="PRK05406.1-3"/>
    <property type="match status" value="1"/>
</dbReference>
<dbReference type="NCBIfam" id="NF003816">
    <property type="entry name" value="PRK05406.1-5"/>
    <property type="match status" value="1"/>
</dbReference>
<dbReference type="PANTHER" id="PTHR30292:SF0">
    <property type="entry name" value="5-OXOPROLINASE SUBUNIT A"/>
    <property type="match status" value="1"/>
</dbReference>
<dbReference type="PANTHER" id="PTHR30292">
    <property type="entry name" value="UNCHARACTERIZED PROTEIN YBGL-RELATED"/>
    <property type="match status" value="1"/>
</dbReference>
<dbReference type="Pfam" id="PF03746">
    <property type="entry name" value="LamB_YcsF"/>
    <property type="match status" value="1"/>
</dbReference>
<dbReference type="SUPFAM" id="SSF88713">
    <property type="entry name" value="Glycoside hydrolase/deacetylase"/>
    <property type="match status" value="1"/>
</dbReference>